<feature type="chain" id="PRO_0000256643" description="Trigger factor">
    <location>
        <begin position="1"/>
        <end position="430"/>
    </location>
</feature>
<feature type="domain" description="PPIase FKBP-type" evidence="1">
    <location>
        <begin position="157"/>
        <end position="242"/>
    </location>
</feature>
<evidence type="ECO:0000255" key="1">
    <source>
        <dbReference type="HAMAP-Rule" id="MF_00303"/>
    </source>
</evidence>
<accession>Q3BWQ2</accession>
<name>TIG_XANE5</name>
<dbReference type="EC" id="5.2.1.8" evidence="1"/>
<dbReference type="EMBL" id="AM039952">
    <property type="protein sequence ID" value="CAJ22711.1"/>
    <property type="molecule type" value="Genomic_DNA"/>
</dbReference>
<dbReference type="RefSeq" id="WP_005913863.1">
    <property type="nucleotide sequence ID" value="NZ_CP017190.1"/>
</dbReference>
<dbReference type="SMR" id="Q3BWQ2"/>
<dbReference type="STRING" id="456327.BJD11_17305"/>
<dbReference type="GeneID" id="97509416"/>
<dbReference type="KEGG" id="xcv:XCV1080"/>
<dbReference type="eggNOG" id="COG0544">
    <property type="taxonomic scope" value="Bacteria"/>
</dbReference>
<dbReference type="HOGENOM" id="CLU_033058_2_0_6"/>
<dbReference type="Proteomes" id="UP000007069">
    <property type="component" value="Chromosome"/>
</dbReference>
<dbReference type="GO" id="GO:0005737">
    <property type="term" value="C:cytoplasm"/>
    <property type="evidence" value="ECO:0007669"/>
    <property type="project" value="UniProtKB-SubCell"/>
</dbReference>
<dbReference type="GO" id="GO:0003755">
    <property type="term" value="F:peptidyl-prolyl cis-trans isomerase activity"/>
    <property type="evidence" value="ECO:0007669"/>
    <property type="project" value="UniProtKB-UniRule"/>
</dbReference>
<dbReference type="GO" id="GO:0044183">
    <property type="term" value="F:protein folding chaperone"/>
    <property type="evidence" value="ECO:0007669"/>
    <property type="project" value="TreeGrafter"/>
</dbReference>
<dbReference type="GO" id="GO:0043022">
    <property type="term" value="F:ribosome binding"/>
    <property type="evidence" value="ECO:0007669"/>
    <property type="project" value="TreeGrafter"/>
</dbReference>
<dbReference type="GO" id="GO:0051083">
    <property type="term" value="P:'de novo' cotranslational protein folding"/>
    <property type="evidence" value="ECO:0007669"/>
    <property type="project" value="TreeGrafter"/>
</dbReference>
<dbReference type="GO" id="GO:0051301">
    <property type="term" value="P:cell division"/>
    <property type="evidence" value="ECO:0007669"/>
    <property type="project" value="UniProtKB-KW"/>
</dbReference>
<dbReference type="GO" id="GO:0061077">
    <property type="term" value="P:chaperone-mediated protein folding"/>
    <property type="evidence" value="ECO:0007669"/>
    <property type="project" value="TreeGrafter"/>
</dbReference>
<dbReference type="GO" id="GO:0015031">
    <property type="term" value="P:protein transport"/>
    <property type="evidence" value="ECO:0007669"/>
    <property type="project" value="UniProtKB-UniRule"/>
</dbReference>
<dbReference type="GO" id="GO:0043335">
    <property type="term" value="P:protein unfolding"/>
    <property type="evidence" value="ECO:0007669"/>
    <property type="project" value="TreeGrafter"/>
</dbReference>
<dbReference type="Gene3D" id="3.10.50.40">
    <property type="match status" value="1"/>
</dbReference>
<dbReference type="Gene3D" id="3.30.70.1050">
    <property type="entry name" value="Trigger factor ribosome-binding domain"/>
    <property type="match status" value="1"/>
</dbReference>
<dbReference type="Gene3D" id="1.10.3120.10">
    <property type="entry name" value="Trigger factor, C-terminal domain"/>
    <property type="match status" value="1"/>
</dbReference>
<dbReference type="HAMAP" id="MF_00303">
    <property type="entry name" value="Trigger_factor_Tig"/>
    <property type="match status" value="1"/>
</dbReference>
<dbReference type="InterPro" id="IPR046357">
    <property type="entry name" value="PPIase_dom_sf"/>
</dbReference>
<dbReference type="InterPro" id="IPR005215">
    <property type="entry name" value="Trig_fac"/>
</dbReference>
<dbReference type="InterPro" id="IPR008880">
    <property type="entry name" value="Trigger_fac_C"/>
</dbReference>
<dbReference type="InterPro" id="IPR037041">
    <property type="entry name" value="Trigger_fac_C_sf"/>
</dbReference>
<dbReference type="InterPro" id="IPR008881">
    <property type="entry name" value="Trigger_fac_ribosome-bd_bac"/>
</dbReference>
<dbReference type="InterPro" id="IPR036611">
    <property type="entry name" value="Trigger_fac_ribosome-bd_sf"/>
</dbReference>
<dbReference type="InterPro" id="IPR027304">
    <property type="entry name" value="Trigger_fact/SurA_dom_sf"/>
</dbReference>
<dbReference type="NCBIfam" id="TIGR00115">
    <property type="entry name" value="tig"/>
    <property type="match status" value="1"/>
</dbReference>
<dbReference type="PANTHER" id="PTHR30560">
    <property type="entry name" value="TRIGGER FACTOR CHAPERONE AND PEPTIDYL-PROLYL CIS/TRANS ISOMERASE"/>
    <property type="match status" value="1"/>
</dbReference>
<dbReference type="PANTHER" id="PTHR30560:SF3">
    <property type="entry name" value="TRIGGER FACTOR-LIKE PROTEIN TIG, CHLOROPLASTIC"/>
    <property type="match status" value="1"/>
</dbReference>
<dbReference type="Pfam" id="PF05698">
    <property type="entry name" value="Trigger_C"/>
    <property type="match status" value="1"/>
</dbReference>
<dbReference type="Pfam" id="PF05697">
    <property type="entry name" value="Trigger_N"/>
    <property type="match status" value="1"/>
</dbReference>
<dbReference type="PIRSF" id="PIRSF003095">
    <property type="entry name" value="Trigger_factor"/>
    <property type="match status" value="1"/>
</dbReference>
<dbReference type="SUPFAM" id="SSF54534">
    <property type="entry name" value="FKBP-like"/>
    <property type="match status" value="1"/>
</dbReference>
<dbReference type="SUPFAM" id="SSF109998">
    <property type="entry name" value="Triger factor/SurA peptide-binding domain-like"/>
    <property type="match status" value="1"/>
</dbReference>
<dbReference type="SUPFAM" id="SSF102735">
    <property type="entry name" value="Trigger factor ribosome-binding domain"/>
    <property type="match status" value="1"/>
</dbReference>
<comment type="function">
    <text evidence="1">Involved in protein export. Acts as a chaperone by maintaining the newly synthesized protein in an open conformation. Functions as a peptidyl-prolyl cis-trans isomerase.</text>
</comment>
<comment type="catalytic activity">
    <reaction evidence="1">
        <text>[protein]-peptidylproline (omega=180) = [protein]-peptidylproline (omega=0)</text>
        <dbReference type="Rhea" id="RHEA:16237"/>
        <dbReference type="Rhea" id="RHEA-COMP:10747"/>
        <dbReference type="Rhea" id="RHEA-COMP:10748"/>
        <dbReference type="ChEBI" id="CHEBI:83833"/>
        <dbReference type="ChEBI" id="CHEBI:83834"/>
        <dbReference type="EC" id="5.2.1.8"/>
    </reaction>
</comment>
<comment type="subcellular location">
    <subcellularLocation>
        <location>Cytoplasm</location>
    </subcellularLocation>
    <text evidence="1">About half TF is bound to the ribosome near the polypeptide exit tunnel while the other half is free in the cytoplasm.</text>
</comment>
<comment type="domain">
    <text evidence="1">Consists of 3 domains; the N-terminus binds the ribosome, the middle domain has PPIase activity, while the C-terminus has intrinsic chaperone activity on its own.</text>
</comment>
<comment type="similarity">
    <text evidence="1">Belongs to the FKBP-type PPIase family. Tig subfamily.</text>
</comment>
<proteinExistence type="inferred from homology"/>
<keyword id="KW-0131">Cell cycle</keyword>
<keyword id="KW-0132">Cell division</keyword>
<keyword id="KW-0143">Chaperone</keyword>
<keyword id="KW-0963">Cytoplasm</keyword>
<keyword id="KW-0413">Isomerase</keyword>
<keyword id="KW-0697">Rotamase</keyword>
<gene>
    <name evidence="1" type="primary">tig</name>
    <name type="ordered locus">XCV1080</name>
</gene>
<protein>
    <recommendedName>
        <fullName evidence="1">Trigger factor</fullName>
        <shortName evidence="1">TF</shortName>
        <ecNumber evidence="1">5.2.1.8</ecNumber>
    </recommendedName>
    <alternativeName>
        <fullName evidence="1">PPIase</fullName>
    </alternativeName>
</protein>
<reference key="1">
    <citation type="journal article" date="2005" name="J. Bacteriol.">
        <title>Insights into genome plasticity and pathogenicity of the plant pathogenic Bacterium Xanthomonas campestris pv. vesicatoria revealed by the complete genome sequence.</title>
        <authorList>
            <person name="Thieme F."/>
            <person name="Koebnik R."/>
            <person name="Bekel T."/>
            <person name="Berger C."/>
            <person name="Boch J."/>
            <person name="Buettner D."/>
            <person name="Caldana C."/>
            <person name="Gaigalat L."/>
            <person name="Goesmann A."/>
            <person name="Kay S."/>
            <person name="Kirchner O."/>
            <person name="Lanz C."/>
            <person name="Linke B."/>
            <person name="McHardy A.C."/>
            <person name="Meyer F."/>
            <person name="Mittenhuber G."/>
            <person name="Nies D.H."/>
            <person name="Niesbach-Kloesgen U."/>
            <person name="Patschkowski T."/>
            <person name="Rueckert C."/>
            <person name="Rupp O."/>
            <person name="Schneiker S."/>
            <person name="Schuster S.C."/>
            <person name="Vorhoelter F.J."/>
            <person name="Weber E."/>
            <person name="Puehler A."/>
            <person name="Bonas U."/>
            <person name="Bartels D."/>
            <person name="Kaiser O."/>
        </authorList>
    </citation>
    <scope>NUCLEOTIDE SEQUENCE [LARGE SCALE GENOMIC DNA]</scope>
    <source>
        <strain>85-10</strain>
    </source>
</reference>
<sequence>MQASIESTGNLERRLTFTLPQERLETHVGGRLRELARTTRIKGFRPGKVPTKVIEQRFGQQVRAEAMEGLLRETFDSAVREHSLRLAGNPRIDQGETDFDFVATFEVVPDFGDIDVTKLSVVRATAEVTDADIDQMIENLRLQRRTWNPVERGAQVGDLVALETWSQAGDERLPAEGVETGSSVLGSGVMFDQIEKGLEGLTKGEEKTLTVDFPAEWRVPQLAGKTVQVHVKAVEVSEPVLPAVDKEFIKSFGVKSGDAEQFRADIRTNLERELKGALMNRLRREVGEQLIAAYAHVEMPPRLVENEARSMLAQQVEQVRRSGRDPGQVPADAHQGFMDAAAKRVLVGLLVGEVARRNELRLESKRVSETLRLIASTYEEPEQVIEMYRNDPQLMNGLQSRVMEEQVIDWIAERAQHTEQSLSFQDAIRV</sequence>
<organism>
    <name type="scientific">Xanthomonas euvesicatoria pv. vesicatoria (strain 85-10)</name>
    <name type="common">Xanthomonas campestris pv. vesicatoria</name>
    <dbReference type="NCBI Taxonomy" id="316273"/>
    <lineage>
        <taxon>Bacteria</taxon>
        <taxon>Pseudomonadati</taxon>
        <taxon>Pseudomonadota</taxon>
        <taxon>Gammaproteobacteria</taxon>
        <taxon>Lysobacterales</taxon>
        <taxon>Lysobacteraceae</taxon>
        <taxon>Xanthomonas</taxon>
    </lineage>
</organism>